<feature type="chain" id="PRO_0000243160" description="Large ribosomal subunit protein uL22">
    <location>
        <begin position="1"/>
        <end position="117"/>
    </location>
</feature>
<organism>
    <name type="scientific">Latilactobacillus sakei subsp. sakei (strain 23K)</name>
    <name type="common">Lactobacillus sakei subsp. sakei</name>
    <dbReference type="NCBI Taxonomy" id="314315"/>
    <lineage>
        <taxon>Bacteria</taxon>
        <taxon>Bacillati</taxon>
        <taxon>Bacillota</taxon>
        <taxon>Bacilli</taxon>
        <taxon>Lactobacillales</taxon>
        <taxon>Lactobacillaceae</taxon>
        <taxon>Latilactobacillus</taxon>
    </lineage>
</organism>
<proteinExistence type="inferred from homology"/>
<dbReference type="EMBL" id="CR936503">
    <property type="protein sequence ID" value="CAI56067.1"/>
    <property type="molecule type" value="Genomic_DNA"/>
</dbReference>
<dbReference type="RefSeq" id="WP_011375445.1">
    <property type="nucleotide sequence ID" value="NC_007576.1"/>
</dbReference>
<dbReference type="SMR" id="Q38UR7"/>
<dbReference type="STRING" id="314315.LCA_1759"/>
<dbReference type="GeneID" id="57132676"/>
<dbReference type="KEGG" id="lsa:LCA_1759"/>
<dbReference type="eggNOG" id="COG0091">
    <property type="taxonomic scope" value="Bacteria"/>
</dbReference>
<dbReference type="HOGENOM" id="CLU_083987_3_3_9"/>
<dbReference type="OrthoDB" id="9805969at2"/>
<dbReference type="Proteomes" id="UP000002707">
    <property type="component" value="Chromosome"/>
</dbReference>
<dbReference type="GO" id="GO:0022625">
    <property type="term" value="C:cytosolic large ribosomal subunit"/>
    <property type="evidence" value="ECO:0007669"/>
    <property type="project" value="TreeGrafter"/>
</dbReference>
<dbReference type="GO" id="GO:0019843">
    <property type="term" value="F:rRNA binding"/>
    <property type="evidence" value="ECO:0007669"/>
    <property type="project" value="UniProtKB-UniRule"/>
</dbReference>
<dbReference type="GO" id="GO:0003735">
    <property type="term" value="F:structural constituent of ribosome"/>
    <property type="evidence" value="ECO:0007669"/>
    <property type="project" value="InterPro"/>
</dbReference>
<dbReference type="GO" id="GO:0006412">
    <property type="term" value="P:translation"/>
    <property type="evidence" value="ECO:0007669"/>
    <property type="project" value="UniProtKB-UniRule"/>
</dbReference>
<dbReference type="CDD" id="cd00336">
    <property type="entry name" value="Ribosomal_L22"/>
    <property type="match status" value="1"/>
</dbReference>
<dbReference type="FunFam" id="3.90.470.10:FF:000001">
    <property type="entry name" value="50S ribosomal protein L22"/>
    <property type="match status" value="1"/>
</dbReference>
<dbReference type="Gene3D" id="3.90.470.10">
    <property type="entry name" value="Ribosomal protein L22/L17"/>
    <property type="match status" value="1"/>
</dbReference>
<dbReference type="HAMAP" id="MF_01331_B">
    <property type="entry name" value="Ribosomal_uL22_B"/>
    <property type="match status" value="1"/>
</dbReference>
<dbReference type="InterPro" id="IPR001063">
    <property type="entry name" value="Ribosomal_uL22"/>
</dbReference>
<dbReference type="InterPro" id="IPR005727">
    <property type="entry name" value="Ribosomal_uL22_bac/chlpt-type"/>
</dbReference>
<dbReference type="InterPro" id="IPR047867">
    <property type="entry name" value="Ribosomal_uL22_bac/org-type"/>
</dbReference>
<dbReference type="InterPro" id="IPR018260">
    <property type="entry name" value="Ribosomal_uL22_CS"/>
</dbReference>
<dbReference type="InterPro" id="IPR036394">
    <property type="entry name" value="Ribosomal_uL22_sf"/>
</dbReference>
<dbReference type="NCBIfam" id="TIGR01044">
    <property type="entry name" value="rplV_bact"/>
    <property type="match status" value="1"/>
</dbReference>
<dbReference type="PANTHER" id="PTHR13501">
    <property type="entry name" value="CHLOROPLAST 50S RIBOSOMAL PROTEIN L22-RELATED"/>
    <property type="match status" value="1"/>
</dbReference>
<dbReference type="PANTHER" id="PTHR13501:SF8">
    <property type="entry name" value="LARGE RIBOSOMAL SUBUNIT PROTEIN UL22M"/>
    <property type="match status" value="1"/>
</dbReference>
<dbReference type="Pfam" id="PF00237">
    <property type="entry name" value="Ribosomal_L22"/>
    <property type="match status" value="1"/>
</dbReference>
<dbReference type="SUPFAM" id="SSF54843">
    <property type="entry name" value="Ribosomal protein L22"/>
    <property type="match status" value="1"/>
</dbReference>
<dbReference type="PROSITE" id="PS00464">
    <property type="entry name" value="RIBOSOMAL_L22"/>
    <property type="match status" value="1"/>
</dbReference>
<gene>
    <name evidence="1" type="primary">rplV</name>
    <name type="ordered locus">LCA_1759</name>
</gene>
<name>RL22_LATSS</name>
<keyword id="KW-1185">Reference proteome</keyword>
<keyword id="KW-0687">Ribonucleoprotein</keyword>
<keyword id="KW-0689">Ribosomal protein</keyword>
<keyword id="KW-0694">RNA-binding</keyword>
<keyword id="KW-0699">rRNA-binding</keyword>
<accession>Q38UR7</accession>
<comment type="function">
    <text evidence="1">This protein binds specifically to 23S rRNA; its binding is stimulated by other ribosomal proteins, e.g. L4, L17, and L20. It is important during the early stages of 50S assembly. It makes multiple contacts with different domains of the 23S rRNA in the assembled 50S subunit and ribosome (By similarity).</text>
</comment>
<comment type="function">
    <text evidence="1">The globular domain of the protein is located near the polypeptide exit tunnel on the outside of the subunit, while an extended beta-hairpin is found that lines the wall of the exit tunnel in the center of the 70S ribosome.</text>
</comment>
<comment type="subunit">
    <text evidence="1">Part of the 50S ribosomal subunit.</text>
</comment>
<comment type="similarity">
    <text evidence="1">Belongs to the universal ribosomal protein uL22 family.</text>
</comment>
<evidence type="ECO:0000255" key="1">
    <source>
        <dbReference type="HAMAP-Rule" id="MF_01331"/>
    </source>
</evidence>
<evidence type="ECO:0000305" key="2"/>
<protein>
    <recommendedName>
        <fullName evidence="1">Large ribosomal subunit protein uL22</fullName>
    </recommendedName>
    <alternativeName>
        <fullName evidence="2">50S ribosomal protein L22</fullName>
    </alternativeName>
</protein>
<reference key="1">
    <citation type="journal article" date="2005" name="Nat. Biotechnol.">
        <title>The complete genome sequence of the meat-borne lactic acid bacterium Lactobacillus sakei 23K.</title>
        <authorList>
            <person name="Chaillou S."/>
            <person name="Champomier-Verges M.-C."/>
            <person name="Cornet M."/>
            <person name="Crutz-Le Coq A.-M."/>
            <person name="Dudez A.-M."/>
            <person name="Martin V."/>
            <person name="Beaufils S."/>
            <person name="Darbon-Rongere E."/>
            <person name="Bossy R."/>
            <person name="Loux V."/>
            <person name="Zagorec M."/>
        </authorList>
    </citation>
    <scope>NUCLEOTIDE SEQUENCE [LARGE SCALE GENOMIC DNA]</scope>
    <source>
        <strain>23K</strain>
    </source>
</reference>
<sequence>MADQITSATASAMSVRMPARKVRMVIDLIRGKSVAEAIAILEFTPRAASPVVIKVLKSAIANAEHNYDLDAENLVVTKAYANEGPTLKRFRPRAKGSASPINKRTSHITVVVSEKEA</sequence>